<feature type="chain" id="PRO_0000059194" description="Prophage bactoprenol glucosyl transferase homolog">
    <location>
        <begin position="1"/>
        <end position="306"/>
    </location>
</feature>
<feature type="topological domain" description="Cytoplasmic" evidence="2">
    <location>
        <begin position="1"/>
        <end position="227"/>
    </location>
</feature>
<feature type="transmembrane region" description="Helical" evidence="2">
    <location>
        <begin position="228"/>
        <end position="248"/>
    </location>
</feature>
<feature type="topological domain" description="Periplasmic" evidence="2">
    <location>
        <begin position="249"/>
        <end position="262"/>
    </location>
</feature>
<feature type="transmembrane region" description="Helical" evidence="2">
    <location>
        <begin position="263"/>
        <end position="283"/>
    </location>
</feature>
<feature type="topological domain" description="Cytoplasmic" evidence="2">
    <location>
        <begin position="284"/>
        <end position="306"/>
    </location>
</feature>
<evidence type="ECO:0000250" key="1"/>
<evidence type="ECO:0000255" key="2"/>
<evidence type="ECO:0000305" key="3"/>
<organism>
    <name type="scientific">Escherichia coli (strain K12)</name>
    <dbReference type="NCBI Taxonomy" id="83333"/>
    <lineage>
        <taxon>Bacteria</taxon>
        <taxon>Pseudomonadati</taxon>
        <taxon>Pseudomonadota</taxon>
        <taxon>Gammaproteobacteria</taxon>
        <taxon>Enterobacterales</taxon>
        <taxon>Enterobacteriaceae</taxon>
        <taxon>Escherichia</taxon>
    </lineage>
</organism>
<keyword id="KW-0997">Cell inner membrane</keyword>
<keyword id="KW-1003">Cell membrane</keyword>
<keyword id="KW-0328">Glycosyltransferase</keyword>
<keyword id="KW-0472">Membrane</keyword>
<keyword id="KW-1185">Reference proteome</keyword>
<keyword id="KW-0808">Transferase</keyword>
<keyword id="KW-0812">Transmembrane</keyword>
<keyword id="KW-1133">Transmembrane helix</keyword>
<protein>
    <recommendedName>
        <fullName evidence="3">Prophage bactoprenol glucosyl transferase homolog</fullName>
        <ecNumber>2.4.1.-</ecNumber>
    </recommendedName>
    <alternativeName>
        <fullName>Bactoprenol glucosyl transferase homolog from prophage CPS-53</fullName>
    </alternativeName>
</protein>
<reference key="1">
    <citation type="journal article" date="1997" name="DNA Res.">
        <title>Construction of a contiguous 874-kb sequence of the Escherichia coli-K12 genome corresponding to 50.0-68.8 min on the linkage map and analysis of its sequence features.</title>
        <authorList>
            <person name="Yamamoto Y."/>
            <person name="Aiba H."/>
            <person name="Baba T."/>
            <person name="Hayashi K."/>
            <person name="Inada T."/>
            <person name="Isono K."/>
            <person name="Itoh T."/>
            <person name="Kimura S."/>
            <person name="Kitagawa M."/>
            <person name="Makino K."/>
            <person name="Miki T."/>
            <person name="Mitsuhashi N."/>
            <person name="Mizobuchi K."/>
            <person name="Mori H."/>
            <person name="Nakade S."/>
            <person name="Nakamura Y."/>
            <person name="Nashimoto H."/>
            <person name="Oshima T."/>
            <person name="Oyama S."/>
            <person name="Saito N."/>
            <person name="Sampei G."/>
            <person name="Satoh Y."/>
            <person name="Sivasundaram S."/>
            <person name="Tagami H."/>
            <person name="Takahashi H."/>
            <person name="Takeda J."/>
            <person name="Takemoto K."/>
            <person name="Uehara K."/>
            <person name="Wada C."/>
            <person name="Yamagata S."/>
            <person name="Horiuchi T."/>
        </authorList>
    </citation>
    <scope>NUCLEOTIDE SEQUENCE [LARGE SCALE GENOMIC DNA]</scope>
    <source>
        <strain>K12 / W3110 / ATCC 27325 / DSM 5911</strain>
    </source>
</reference>
<reference key="2">
    <citation type="journal article" date="1997" name="Science">
        <title>The complete genome sequence of Escherichia coli K-12.</title>
        <authorList>
            <person name="Blattner F.R."/>
            <person name="Plunkett G. III"/>
            <person name="Bloch C.A."/>
            <person name="Perna N.T."/>
            <person name="Burland V."/>
            <person name="Riley M."/>
            <person name="Collado-Vides J."/>
            <person name="Glasner J.D."/>
            <person name="Rode C.K."/>
            <person name="Mayhew G.F."/>
            <person name="Gregor J."/>
            <person name="Davis N.W."/>
            <person name="Kirkpatrick H.A."/>
            <person name="Goeden M.A."/>
            <person name="Rose D.J."/>
            <person name="Mau B."/>
            <person name="Shao Y."/>
        </authorList>
    </citation>
    <scope>NUCLEOTIDE SEQUENCE [LARGE SCALE GENOMIC DNA]</scope>
    <source>
        <strain>K12 / MG1655 / ATCC 47076</strain>
    </source>
</reference>
<reference key="3">
    <citation type="journal article" date="2006" name="Mol. Syst. Biol.">
        <title>Highly accurate genome sequences of Escherichia coli K-12 strains MG1655 and W3110.</title>
        <authorList>
            <person name="Hayashi K."/>
            <person name="Morooka N."/>
            <person name="Yamamoto Y."/>
            <person name="Fujita K."/>
            <person name="Isono K."/>
            <person name="Choi S."/>
            <person name="Ohtsubo E."/>
            <person name="Baba T."/>
            <person name="Wanner B.L."/>
            <person name="Mori H."/>
            <person name="Horiuchi T."/>
        </authorList>
    </citation>
    <scope>NUCLEOTIDE SEQUENCE [LARGE SCALE GENOMIC DNA]</scope>
    <source>
        <strain>K12 / W3110 / ATCC 27325 / DSM 5911</strain>
    </source>
</reference>
<reference key="4">
    <citation type="journal article" date="2005" name="Science">
        <title>Global topology analysis of the Escherichia coli inner membrane proteome.</title>
        <authorList>
            <person name="Daley D.O."/>
            <person name="Rapp M."/>
            <person name="Granseth E."/>
            <person name="Melen K."/>
            <person name="Drew D."/>
            <person name="von Heijne G."/>
        </authorList>
    </citation>
    <scope>TOPOLOGY [LARGE SCALE ANALYSIS]</scope>
    <source>
        <strain>K12 / MG1655 / ATCC 47076</strain>
    </source>
</reference>
<gene>
    <name type="primary">yfdH</name>
    <name type="ordered locus">b2351</name>
    <name type="ordered locus">JW2347</name>
</gene>
<dbReference type="EC" id="2.4.1.-"/>
<dbReference type="EMBL" id="U00096">
    <property type="protein sequence ID" value="AAC75410.1"/>
    <property type="molecule type" value="Genomic_DNA"/>
</dbReference>
<dbReference type="EMBL" id="AP009048">
    <property type="protein sequence ID" value="BAA16210.1"/>
    <property type="molecule type" value="Genomic_DNA"/>
</dbReference>
<dbReference type="PIR" id="D65008">
    <property type="entry name" value="D65008"/>
</dbReference>
<dbReference type="RefSeq" id="NP_416852.1">
    <property type="nucleotide sequence ID" value="NC_000913.3"/>
</dbReference>
<dbReference type="RefSeq" id="WP_000703651.1">
    <property type="nucleotide sequence ID" value="NZ_LN832404.1"/>
</dbReference>
<dbReference type="SMR" id="P77293"/>
<dbReference type="BioGRID" id="4260542">
    <property type="interactions" value="226"/>
</dbReference>
<dbReference type="DIP" id="DIP-11997N"/>
<dbReference type="FunCoup" id="P77293">
    <property type="interactions" value="637"/>
</dbReference>
<dbReference type="IntAct" id="P77293">
    <property type="interactions" value="1"/>
</dbReference>
<dbReference type="STRING" id="511145.b2351"/>
<dbReference type="CAZy" id="GT2">
    <property type="family name" value="Glycosyltransferase Family 2"/>
</dbReference>
<dbReference type="jPOST" id="P77293"/>
<dbReference type="PaxDb" id="511145-b2351"/>
<dbReference type="EnsemblBacteria" id="AAC75410">
    <property type="protein sequence ID" value="AAC75410"/>
    <property type="gene ID" value="b2351"/>
</dbReference>
<dbReference type="GeneID" id="949098"/>
<dbReference type="KEGG" id="ecj:JW2347"/>
<dbReference type="KEGG" id="eco:b2351"/>
<dbReference type="KEGG" id="ecoc:C3026_13080"/>
<dbReference type="PATRIC" id="fig|511145.12.peg.2446"/>
<dbReference type="EchoBASE" id="EB3884"/>
<dbReference type="eggNOG" id="COG0463">
    <property type="taxonomic scope" value="Bacteria"/>
</dbReference>
<dbReference type="HOGENOM" id="CLU_033536_0_1_6"/>
<dbReference type="InParanoid" id="P77293"/>
<dbReference type="OMA" id="PLRMWTY"/>
<dbReference type="OrthoDB" id="9811884at2"/>
<dbReference type="PhylomeDB" id="P77293"/>
<dbReference type="BioCyc" id="EcoCyc:G7220-MONOMER"/>
<dbReference type="BioCyc" id="MetaCyc:G7220-MONOMER"/>
<dbReference type="PRO" id="PR:P77293"/>
<dbReference type="Proteomes" id="UP000000625">
    <property type="component" value="Chromosome"/>
</dbReference>
<dbReference type="GO" id="GO:0005886">
    <property type="term" value="C:plasma membrane"/>
    <property type="evidence" value="ECO:0000314"/>
    <property type="project" value="EcoCyc"/>
</dbReference>
<dbReference type="GO" id="GO:0016757">
    <property type="term" value="F:glycosyltransferase activity"/>
    <property type="evidence" value="ECO:0007669"/>
    <property type="project" value="UniProtKB-KW"/>
</dbReference>
<dbReference type="CDD" id="cd04187">
    <property type="entry name" value="DPM1_like_bac"/>
    <property type="match status" value="1"/>
</dbReference>
<dbReference type="FunFam" id="3.90.550.10:FF:000099">
    <property type="entry name" value="Bactoprenol glucosyl transferase"/>
    <property type="match status" value="1"/>
</dbReference>
<dbReference type="Gene3D" id="3.90.550.10">
    <property type="entry name" value="Spore Coat Polysaccharide Biosynthesis Protein SpsA, Chain A"/>
    <property type="match status" value="1"/>
</dbReference>
<dbReference type="InterPro" id="IPR001173">
    <property type="entry name" value="Glyco_trans_2-like"/>
</dbReference>
<dbReference type="InterPro" id="IPR050256">
    <property type="entry name" value="Glycosyltransferase_2"/>
</dbReference>
<dbReference type="InterPro" id="IPR029044">
    <property type="entry name" value="Nucleotide-diphossugar_trans"/>
</dbReference>
<dbReference type="PANTHER" id="PTHR48090:SF1">
    <property type="entry name" value="PROPHAGE BACTOPRENOL GLUCOSYL TRANSFERASE HOMOLOG"/>
    <property type="match status" value="1"/>
</dbReference>
<dbReference type="PANTHER" id="PTHR48090">
    <property type="entry name" value="UNDECAPRENYL-PHOSPHATE 4-DEOXY-4-FORMAMIDO-L-ARABINOSE TRANSFERASE-RELATED"/>
    <property type="match status" value="1"/>
</dbReference>
<dbReference type="Pfam" id="PF00535">
    <property type="entry name" value="Glycos_transf_2"/>
    <property type="match status" value="1"/>
</dbReference>
<dbReference type="SUPFAM" id="SSF53448">
    <property type="entry name" value="Nucleotide-diphospho-sugar transferases"/>
    <property type="match status" value="1"/>
</dbReference>
<name>GTRB_ECOLI</name>
<proteinExistence type="evidence at protein level"/>
<sequence>MKISLVVPVFNEEEAIPIFYKTVREFEELKSYEVEIVFINDGSKDATESIINALAVSDPLVVPLSFTRNFGKEPALFAGLDHATGDAIIPIDVDLQDPIEVIPHLIEKWQAGADMVLAKRSDRSTDGRLKRKTAEWFYKLHNKISNPKIEENVGDFRLMSRDVVENIKLMPERNLFMKGILSWVGGKTDIVEYVRAERIAGDTKFNGWKLWNLALEGITSFSTFPLRIWTYIGLVVASVAFIYGAWMILDTIIFGNAVRGYPSLLVSILFLGGIQMIGIGVLGEYIGRTYIETKKRPKYIIKRVKK</sequence>
<accession>P77293</accession>
<comment type="function">
    <text evidence="1">Involved in O antigen modification. Catalyzes the transfer of the glucose residue from UDP-glucose to a lipid carrier (By similarity).</text>
</comment>
<comment type="interaction">
    <interactant intactId="EBI-545379">
        <id>P77293</id>
    </interactant>
    <interactant intactId="EBI-545361">
        <id>P77399</id>
        <label>fadJ</label>
    </interactant>
    <organismsDiffer>false</organismsDiffer>
    <experiments>2</experiments>
</comment>
<comment type="subcellular location">
    <subcellularLocation>
        <location>Cell inner membrane</location>
        <topology>Multi-pass membrane protein</topology>
    </subcellularLocation>
</comment>
<comment type="similarity">
    <text evidence="3">Belongs to the glycosyltransferase 2 family. GtrB subfamily.</text>
</comment>